<reference key="1">
    <citation type="submission" date="2009-04" db="EMBL/GenBank/DDBJ databases">
        <title>Genome sequence of Bacillus anthracis A0248.</title>
        <authorList>
            <person name="Dodson R.J."/>
            <person name="Munk A.C."/>
            <person name="Bruce D."/>
            <person name="Detter C."/>
            <person name="Tapia R."/>
            <person name="Sutton G."/>
            <person name="Sims D."/>
            <person name="Brettin T."/>
        </authorList>
    </citation>
    <scope>NUCLEOTIDE SEQUENCE [LARGE SCALE GENOMIC DNA]</scope>
    <source>
        <strain>A0248</strain>
    </source>
</reference>
<dbReference type="EC" id="2.4.2.10" evidence="1"/>
<dbReference type="EMBL" id="CP001598">
    <property type="protein sequence ID" value="ACQ48640.1"/>
    <property type="molecule type" value="Genomic_DNA"/>
</dbReference>
<dbReference type="RefSeq" id="WP_000711466.1">
    <property type="nucleotide sequence ID" value="NC_012659.1"/>
</dbReference>
<dbReference type="SMR" id="C3P652"/>
<dbReference type="GeneID" id="45023711"/>
<dbReference type="KEGG" id="bai:BAA_4044"/>
<dbReference type="HOGENOM" id="CLU_074878_1_1_9"/>
<dbReference type="UniPathway" id="UPA00070">
    <property type="reaction ID" value="UER00119"/>
</dbReference>
<dbReference type="GO" id="GO:0000287">
    <property type="term" value="F:magnesium ion binding"/>
    <property type="evidence" value="ECO:0007669"/>
    <property type="project" value="UniProtKB-UniRule"/>
</dbReference>
<dbReference type="GO" id="GO:0004588">
    <property type="term" value="F:orotate phosphoribosyltransferase activity"/>
    <property type="evidence" value="ECO:0007669"/>
    <property type="project" value="UniProtKB-UniRule"/>
</dbReference>
<dbReference type="GO" id="GO:0044205">
    <property type="term" value="P:'de novo' UMP biosynthetic process"/>
    <property type="evidence" value="ECO:0007669"/>
    <property type="project" value="UniProtKB-UniRule"/>
</dbReference>
<dbReference type="GO" id="GO:0019856">
    <property type="term" value="P:pyrimidine nucleobase biosynthetic process"/>
    <property type="evidence" value="ECO:0007669"/>
    <property type="project" value="TreeGrafter"/>
</dbReference>
<dbReference type="CDD" id="cd06223">
    <property type="entry name" value="PRTases_typeI"/>
    <property type="match status" value="1"/>
</dbReference>
<dbReference type="Gene3D" id="3.40.50.2020">
    <property type="match status" value="1"/>
</dbReference>
<dbReference type="HAMAP" id="MF_01208">
    <property type="entry name" value="PyrE"/>
    <property type="match status" value="1"/>
</dbReference>
<dbReference type="InterPro" id="IPR023031">
    <property type="entry name" value="OPRT"/>
</dbReference>
<dbReference type="InterPro" id="IPR004467">
    <property type="entry name" value="Or_phspho_trans_dom"/>
</dbReference>
<dbReference type="InterPro" id="IPR000836">
    <property type="entry name" value="PRibTrfase_dom"/>
</dbReference>
<dbReference type="InterPro" id="IPR029057">
    <property type="entry name" value="PRTase-like"/>
</dbReference>
<dbReference type="NCBIfam" id="TIGR00336">
    <property type="entry name" value="pyrE"/>
    <property type="match status" value="1"/>
</dbReference>
<dbReference type="PANTHER" id="PTHR19278">
    <property type="entry name" value="OROTATE PHOSPHORIBOSYLTRANSFERASE"/>
    <property type="match status" value="1"/>
</dbReference>
<dbReference type="PANTHER" id="PTHR19278:SF9">
    <property type="entry name" value="URIDINE 5'-MONOPHOSPHATE SYNTHASE"/>
    <property type="match status" value="1"/>
</dbReference>
<dbReference type="Pfam" id="PF00156">
    <property type="entry name" value="Pribosyltran"/>
    <property type="match status" value="1"/>
</dbReference>
<dbReference type="SUPFAM" id="SSF53271">
    <property type="entry name" value="PRTase-like"/>
    <property type="match status" value="1"/>
</dbReference>
<dbReference type="PROSITE" id="PS00103">
    <property type="entry name" value="PUR_PYR_PR_TRANSFER"/>
    <property type="match status" value="1"/>
</dbReference>
<protein>
    <recommendedName>
        <fullName evidence="1">Orotate phosphoribosyltransferase</fullName>
        <shortName evidence="1">OPRT</shortName>
        <shortName evidence="1">OPRTase</shortName>
        <ecNumber evidence="1">2.4.2.10</ecNumber>
    </recommendedName>
</protein>
<accession>C3P652</accession>
<sequence length="210" mass="22714">MKKEIASHLLEIGAVFLQPNDPFTWSSGMKSPIYCDNRLTLSYPKVRQTIAAGLEELIKEHFPTVEVIAGTATAGIAHAAWVSDRMDLPMCYVRSKAKGHGKGNQIEGKAEKGQKVVVVEDLISTGGSAITCVEALREAGCEVLGIVSIFTYELEAGKEKLEAANVASYSLSDYSALTEVAAEKGIIGQAETKKLQEWRKNPADEAWITA</sequence>
<feature type="chain" id="PRO_1000164669" description="Orotate phosphoribosyltransferase">
    <location>
        <begin position="1"/>
        <end position="210"/>
    </location>
</feature>
<feature type="binding site" evidence="1">
    <location>
        <position position="94"/>
    </location>
    <ligand>
        <name>5-phospho-alpha-D-ribose 1-diphosphate</name>
        <dbReference type="ChEBI" id="CHEBI:58017"/>
        <note>ligand shared between dimeric partners</note>
    </ligand>
</feature>
<feature type="binding site" evidence="1">
    <location>
        <position position="98"/>
    </location>
    <ligand>
        <name>5-phospho-alpha-D-ribose 1-diphosphate</name>
        <dbReference type="ChEBI" id="CHEBI:58017"/>
        <note>ligand shared between dimeric partners</note>
    </ligand>
</feature>
<feature type="binding site" evidence="1">
    <location>
        <position position="100"/>
    </location>
    <ligand>
        <name>5-phospho-alpha-D-ribose 1-diphosphate</name>
        <dbReference type="ChEBI" id="CHEBI:58017"/>
        <note>ligand shared between dimeric partners</note>
    </ligand>
</feature>
<feature type="binding site" description="in other chain" evidence="1">
    <location>
        <begin position="120"/>
        <end position="128"/>
    </location>
    <ligand>
        <name>5-phospho-alpha-D-ribose 1-diphosphate</name>
        <dbReference type="ChEBI" id="CHEBI:58017"/>
        <note>ligand shared between dimeric partners</note>
    </ligand>
</feature>
<feature type="binding site" evidence="1">
    <location>
        <position position="124"/>
    </location>
    <ligand>
        <name>orotate</name>
        <dbReference type="ChEBI" id="CHEBI:30839"/>
    </ligand>
</feature>
<name>PYRE_BACAA</name>
<proteinExistence type="inferred from homology"/>
<evidence type="ECO:0000255" key="1">
    <source>
        <dbReference type="HAMAP-Rule" id="MF_01208"/>
    </source>
</evidence>
<comment type="function">
    <text evidence="1">Catalyzes the transfer of a ribosyl phosphate group from 5-phosphoribose 1-diphosphate to orotate, leading to the formation of orotidine monophosphate (OMP).</text>
</comment>
<comment type="catalytic activity">
    <reaction evidence="1">
        <text>orotidine 5'-phosphate + diphosphate = orotate + 5-phospho-alpha-D-ribose 1-diphosphate</text>
        <dbReference type="Rhea" id="RHEA:10380"/>
        <dbReference type="ChEBI" id="CHEBI:30839"/>
        <dbReference type="ChEBI" id="CHEBI:33019"/>
        <dbReference type="ChEBI" id="CHEBI:57538"/>
        <dbReference type="ChEBI" id="CHEBI:58017"/>
        <dbReference type="EC" id="2.4.2.10"/>
    </reaction>
</comment>
<comment type="cofactor">
    <cofactor evidence="1">
        <name>Mg(2+)</name>
        <dbReference type="ChEBI" id="CHEBI:18420"/>
    </cofactor>
</comment>
<comment type="pathway">
    <text evidence="1">Pyrimidine metabolism; UMP biosynthesis via de novo pathway; UMP from orotate: step 1/2.</text>
</comment>
<comment type="subunit">
    <text evidence="1">Homodimer.</text>
</comment>
<comment type="similarity">
    <text evidence="1">Belongs to the purine/pyrimidine phosphoribosyltransferase family. PyrE subfamily.</text>
</comment>
<keyword id="KW-0328">Glycosyltransferase</keyword>
<keyword id="KW-0460">Magnesium</keyword>
<keyword id="KW-0665">Pyrimidine biosynthesis</keyword>
<keyword id="KW-0808">Transferase</keyword>
<gene>
    <name evidence="1" type="primary">pyrE</name>
    <name type="ordered locus">BAA_4044</name>
</gene>
<organism>
    <name type="scientific">Bacillus anthracis (strain A0248)</name>
    <dbReference type="NCBI Taxonomy" id="592021"/>
    <lineage>
        <taxon>Bacteria</taxon>
        <taxon>Bacillati</taxon>
        <taxon>Bacillota</taxon>
        <taxon>Bacilli</taxon>
        <taxon>Bacillales</taxon>
        <taxon>Bacillaceae</taxon>
        <taxon>Bacillus</taxon>
        <taxon>Bacillus cereus group</taxon>
    </lineage>
</organism>